<keyword id="KW-0256">Endoplasmic reticulum</keyword>
<keyword id="KW-0275">Fatty acid biosynthesis</keyword>
<keyword id="KW-0276">Fatty acid metabolism</keyword>
<keyword id="KW-0444">Lipid biosynthesis</keyword>
<keyword id="KW-0443">Lipid metabolism</keyword>
<keyword id="KW-0472">Membrane</keyword>
<keyword id="KW-0521">NADP</keyword>
<keyword id="KW-0560">Oxidoreductase</keyword>
<keyword id="KW-1185">Reference proteome</keyword>
<keyword id="KW-0812">Transmembrane</keyword>
<keyword id="KW-1133">Transmembrane helix</keyword>
<feature type="chain" id="PRO_0000421284" description="Probable very-long-chain enoyl-CoA reductase art-1">
    <location>
        <begin position="1"/>
        <end position="308"/>
    </location>
</feature>
<feature type="transmembrane region" description="Helical" evidence="2">
    <location>
        <begin position="112"/>
        <end position="132"/>
    </location>
</feature>
<feature type="transmembrane region" description="Helical" evidence="2">
    <location>
        <begin position="169"/>
        <end position="189"/>
    </location>
</feature>
<feature type="transmembrane region" description="Helical" evidence="2">
    <location>
        <begin position="194"/>
        <end position="214"/>
    </location>
</feature>
<feature type="transmembrane region" description="Helical" evidence="2">
    <location>
        <begin position="255"/>
        <end position="275"/>
    </location>
</feature>
<feature type="domain" description="Ubiquitin-like" evidence="3">
    <location>
        <begin position="7"/>
        <end position="85"/>
    </location>
</feature>
<proteinExistence type="inferred from homology"/>
<evidence type="ECO:0000250" key="1">
    <source>
        <dbReference type="UniProtKB" id="Q9NZ01"/>
    </source>
</evidence>
<evidence type="ECO:0000255" key="2"/>
<evidence type="ECO:0000255" key="3">
    <source>
        <dbReference type="PROSITE-ProRule" id="PRU00214"/>
    </source>
</evidence>
<evidence type="ECO:0000305" key="4"/>
<comment type="function">
    <text evidence="1">Catalyzes the last of the four reactions of the long-chain fatty acids elongation cycle. This endoplasmic reticulum-bound enzymatic process, allows the addition of 2 carbons to the chain of long- and very long-chain fatty acids/VLCFAs per cycle. This enzyme reduces the trans-2,3-enoyl-CoA fatty acid intermediate to an acyl-CoA that can be further elongated by entering a new cycle of elongation. Thereby, it participates in the production of VLCFAs of different chain lengths that are involved in multiple biological processes as precursors of membrane lipids and lipid mediators.</text>
</comment>
<comment type="catalytic activity">
    <reaction evidence="1">
        <text>a very-long-chain 2,3-saturated fatty acyl-CoA + NADP(+) = a very-long-chain (2E)-enoyl-CoA + NADPH + H(+)</text>
        <dbReference type="Rhea" id="RHEA:14473"/>
        <dbReference type="ChEBI" id="CHEBI:15378"/>
        <dbReference type="ChEBI" id="CHEBI:57783"/>
        <dbReference type="ChEBI" id="CHEBI:58349"/>
        <dbReference type="ChEBI" id="CHEBI:83724"/>
        <dbReference type="ChEBI" id="CHEBI:83728"/>
        <dbReference type="EC" id="1.3.1.93"/>
    </reaction>
</comment>
<comment type="pathway">
    <text evidence="1">Lipid metabolism; fatty acid biosynthesis.</text>
</comment>
<comment type="subcellular location">
    <subcellularLocation>
        <location evidence="1">Endoplasmic reticulum membrane</location>
        <topology evidence="1">Multi-pass membrane protein</topology>
    </subcellularLocation>
</comment>
<comment type="similarity">
    <text evidence="4">Belongs to the steroid 5-alpha reductase family.</text>
</comment>
<gene>
    <name type="primary">art-1</name>
    <name type="ORF">C15F1.6</name>
</gene>
<protein>
    <recommendedName>
        <fullName>Probable very-long-chain enoyl-CoA reductase art-1</fullName>
        <ecNumber>1.3.1.93</ecNumber>
    </recommendedName>
</protein>
<sequence length="308" mass="35110">MSGILEVYDAKRTDNLIITLEGISGSETIKAIKKRIAQKKLKLTEERQALRVEPKGKPLADDQKLSDLGLSSQKAVLYVRDLGPQIAWKTVFMAEYAGPLFVYPLFYLRPTFIYGQAAVNATMHPAVQIAFFAWSFHYAKRLFETQFIHRFGNSTMPQFNLVKNCSYYWGFAAFVAYFVNHPLFTPPAFGDLQVYFGLAGFVISEFGNLSIHILLRNLRPAGTRERRIPKPDGNPLSLLFNYVSCPNYTYEVASWIFFSIMVQSLPAIIFTTAGFAQMAIWAQGKHRNYLKEFPDYPKNRKAIVPFVL</sequence>
<organism>
    <name type="scientific">Caenorhabditis elegans</name>
    <dbReference type="NCBI Taxonomy" id="6239"/>
    <lineage>
        <taxon>Eukaryota</taxon>
        <taxon>Metazoa</taxon>
        <taxon>Ecdysozoa</taxon>
        <taxon>Nematoda</taxon>
        <taxon>Chromadorea</taxon>
        <taxon>Rhabditida</taxon>
        <taxon>Rhabditina</taxon>
        <taxon>Rhabditomorpha</taxon>
        <taxon>Rhabditoidea</taxon>
        <taxon>Rhabditidae</taxon>
        <taxon>Peloderinae</taxon>
        <taxon>Caenorhabditis</taxon>
    </lineage>
</organism>
<dbReference type="EC" id="1.3.1.93"/>
<dbReference type="EMBL" id="FO080553">
    <property type="protein sequence ID" value="CCD64616.1"/>
    <property type="molecule type" value="Genomic_DNA"/>
</dbReference>
<dbReference type="RefSeq" id="NP_495430.1">
    <property type="nucleotide sequence ID" value="NM_063029.7"/>
</dbReference>
<dbReference type="SMR" id="Q9N5Y2"/>
<dbReference type="BioGRID" id="39478">
    <property type="interactions" value="11"/>
</dbReference>
<dbReference type="DIP" id="DIP-27027N"/>
<dbReference type="FunCoup" id="Q9N5Y2">
    <property type="interactions" value="975"/>
</dbReference>
<dbReference type="STRING" id="6239.C15F1.6.1"/>
<dbReference type="PaxDb" id="6239-C15F1.6"/>
<dbReference type="PeptideAtlas" id="Q9N5Y2"/>
<dbReference type="EnsemblMetazoa" id="C15F1.6.1">
    <property type="protein sequence ID" value="C15F1.6.1"/>
    <property type="gene ID" value="WBGene00000198"/>
</dbReference>
<dbReference type="GeneID" id="174140"/>
<dbReference type="KEGG" id="cel:CELE_C15F1.6"/>
<dbReference type="UCSC" id="C15F1.6.1">
    <property type="organism name" value="c. elegans"/>
</dbReference>
<dbReference type="AGR" id="WB:WBGene00000198"/>
<dbReference type="CTD" id="174140"/>
<dbReference type="WormBase" id="C15F1.6">
    <property type="protein sequence ID" value="CE20509"/>
    <property type="gene ID" value="WBGene00000198"/>
    <property type="gene designation" value="art-1"/>
</dbReference>
<dbReference type="eggNOG" id="KOG1639">
    <property type="taxonomic scope" value="Eukaryota"/>
</dbReference>
<dbReference type="GeneTree" id="ENSGT00950000182886"/>
<dbReference type="HOGENOM" id="CLU_059260_1_0_1"/>
<dbReference type="InParanoid" id="Q9N5Y2"/>
<dbReference type="OMA" id="ATMPIFN"/>
<dbReference type="OrthoDB" id="540503at2759"/>
<dbReference type="PhylomeDB" id="Q9N5Y2"/>
<dbReference type="Reactome" id="R-CEL-75876">
    <property type="pathway name" value="Synthesis of very long-chain fatty acyl-CoAs"/>
</dbReference>
<dbReference type="UniPathway" id="UPA00094"/>
<dbReference type="PRO" id="PR:Q9N5Y2"/>
<dbReference type="Proteomes" id="UP000001940">
    <property type="component" value="Chromosome II"/>
</dbReference>
<dbReference type="Bgee" id="WBGene00000198">
    <property type="expression patterns" value="Expressed in larva and 4 other cell types or tissues"/>
</dbReference>
<dbReference type="GO" id="GO:0005789">
    <property type="term" value="C:endoplasmic reticulum membrane"/>
    <property type="evidence" value="ECO:0007669"/>
    <property type="project" value="UniProtKB-SubCell"/>
</dbReference>
<dbReference type="GO" id="GO:0016491">
    <property type="term" value="F:oxidoreductase activity"/>
    <property type="evidence" value="ECO:0000318"/>
    <property type="project" value="GO_Central"/>
</dbReference>
<dbReference type="GO" id="GO:0102758">
    <property type="term" value="F:very-long-chain enoyl-CoA reductase activity"/>
    <property type="evidence" value="ECO:0007669"/>
    <property type="project" value="UniProtKB-EC"/>
</dbReference>
<dbReference type="GO" id="GO:0042761">
    <property type="term" value="P:very long-chain fatty acid biosynthetic process"/>
    <property type="evidence" value="ECO:0000318"/>
    <property type="project" value="GO_Central"/>
</dbReference>
<dbReference type="CDD" id="cd01801">
    <property type="entry name" value="Ubl_TECR_like"/>
    <property type="match status" value="1"/>
</dbReference>
<dbReference type="FunFam" id="1.20.120.1630:FF:000010">
    <property type="entry name" value="Steroid alpha reductase family protein"/>
    <property type="match status" value="1"/>
</dbReference>
<dbReference type="FunFam" id="3.10.20.90:FF:000131">
    <property type="entry name" value="trans-2,3-enoyl-CoA reductase-like"/>
    <property type="match status" value="1"/>
</dbReference>
<dbReference type="Gene3D" id="1.20.120.1630">
    <property type="match status" value="1"/>
</dbReference>
<dbReference type="Gene3D" id="3.10.20.90">
    <property type="entry name" value="Phosphatidylinositol 3-kinase Catalytic Subunit, Chain A, domain 1"/>
    <property type="match status" value="1"/>
</dbReference>
<dbReference type="InterPro" id="IPR001104">
    <property type="entry name" value="3-oxo-5_a-steroid_4-DH_C"/>
</dbReference>
<dbReference type="InterPro" id="IPR039357">
    <property type="entry name" value="SRD5A/TECR"/>
</dbReference>
<dbReference type="InterPro" id="IPR049127">
    <property type="entry name" value="TECR-like_N"/>
</dbReference>
<dbReference type="InterPro" id="IPR000626">
    <property type="entry name" value="Ubiquitin-like_dom"/>
</dbReference>
<dbReference type="InterPro" id="IPR029071">
    <property type="entry name" value="Ubiquitin-like_domsf"/>
</dbReference>
<dbReference type="PANTHER" id="PTHR10556">
    <property type="entry name" value="3-OXO-5-ALPHA-STEROID 4-DEHYDROGENASE"/>
    <property type="match status" value="1"/>
</dbReference>
<dbReference type="PANTHER" id="PTHR10556:SF28">
    <property type="entry name" value="VERY-LONG-CHAIN ENOYL-COA REDUCTASE"/>
    <property type="match status" value="1"/>
</dbReference>
<dbReference type="Pfam" id="PF02544">
    <property type="entry name" value="Steroid_dh"/>
    <property type="match status" value="1"/>
</dbReference>
<dbReference type="Pfam" id="PF21696">
    <property type="entry name" value="TECR_N"/>
    <property type="match status" value="1"/>
</dbReference>
<dbReference type="SUPFAM" id="SSF54236">
    <property type="entry name" value="Ubiquitin-like"/>
    <property type="match status" value="1"/>
</dbReference>
<dbReference type="PROSITE" id="PS50244">
    <property type="entry name" value="S5A_REDUCTASE"/>
    <property type="match status" value="1"/>
</dbReference>
<dbReference type="PROSITE" id="PS50053">
    <property type="entry name" value="UBIQUITIN_2"/>
    <property type="match status" value="1"/>
</dbReference>
<reference key="1">
    <citation type="journal article" date="1998" name="Science">
        <title>Genome sequence of the nematode C. elegans: a platform for investigating biology.</title>
        <authorList>
            <consortium name="The C. elegans sequencing consortium"/>
        </authorList>
    </citation>
    <scope>NUCLEOTIDE SEQUENCE [LARGE SCALE GENOMIC DNA]</scope>
    <source>
        <strain>Bristol N2</strain>
    </source>
</reference>
<name>TECR_CAEEL</name>
<accession>Q9N5Y2</accession>